<keyword id="KW-0028">Amino-acid biosynthesis</keyword>
<keyword id="KW-0057">Aromatic amino acid biosynthesis</keyword>
<keyword id="KW-0210">Decarboxylase</keyword>
<keyword id="KW-0456">Lyase</keyword>
<keyword id="KW-0822">Tryptophan biosynthesis</keyword>
<evidence type="ECO:0000255" key="1">
    <source>
        <dbReference type="HAMAP-Rule" id="MF_00134"/>
    </source>
</evidence>
<accession>Q4UZF8</accession>
<reference key="1">
    <citation type="journal article" date="2005" name="Genome Res.">
        <title>Comparative and functional genomic analyses of the pathogenicity of phytopathogen Xanthomonas campestris pv. campestris.</title>
        <authorList>
            <person name="Qian W."/>
            <person name="Jia Y."/>
            <person name="Ren S.-X."/>
            <person name="He Y.-Q."/>
            <person name="Feng J.-X."/>
            <person name="Lu L.-F."/>
            <person name="Sun Q."/>
            <person name="Ying G."/>
            <person name="Tang D.-J."/>
            <person name="Tang H."/>
            <person name="Wu W."/>
            <person name="Hao P."/>
            <person name="Wang L."/>
            <person name="Jiang B.-L."/>
            <person name="Zeng S."/>
            <person name="Gu W.-Y."/>
            <person name="Lu G."/>
            <person name="Rong L."/>
            <person name="Tian Y."/>
            <person name="Yao Z."/>
            <person name="Fu G."/>
            <person name="Chen B."/>
            <person name="Fang R."/>
            <person name="Qiang B."/>
            <person name="Chen Z."/>
            <person name="Zhao G.-P."/>
            <person name="Tang J.-L."/>
            <person name="He C."/>
        </authorList>
    </citation>
    <scope>NUCLEOTIDE SEQUENCE [LARGE SCALE GENOMIC DNA]</scope>
    <source>
        <strain>8004</strain>
    </source>
</reference>
<feature type="chain" id="PRO_1000018572" description="Indole-3-glycerol phosphate synthase">
    <location>
        <begin position="1"/>
        <end position="265"/>
    </location>
</feature>
<name>TRPC_XANC8</name>
<proteinExistence type="inferred from homology"/>
<comment type="catalytic activity">
    <reaction evidence="1">
        <text>1-(2-carboxyphenylamino)-1-deoxy-D-ribulose 5-phosphate + H(+) = (1S,2R)-1-C-(indol-3-yl)glycerol 3-phosphate + CO2 + H2O</text>
        <dbReference type="Rhea" id="RHEA:23476"/>
        <dbReference type="ChEBI" id="CHEBI:15377"/>
        <dbReference type="ChEBI" id="CHEBI:15378"/>
        <dbReference type="ChEBI" id="CHEBI:16526"/>
        <dbReference type="ChEBI" id="CHEBI:58613"/>
        <dbReference type="ChEBI" id="CHEBI:58866"/>
        <dbReference type="EC" id="4.1.1.48"/>
    </reaction>
</comment>
<comment type="pathway">
    <text evidence="1">Amino-acid biosynthesis; L-tryptophan biosynthesis; L-tryptophan from chorismate: step 4/5.</text>
</comment>
<comment type="similarity">
    <text evidence="1">Belongs to the TrpC family.</text>
</comment>
<dbReference type="EC" id="4.1.1.48" evidence="1"/>
<dbReference type="EMBL" id="CP000050">
    <property type="protein sequence ID" value="AAY47565.1"/>
    <property type="molecule type" value="Genomic_DNA"/>
</dbReference>
<dbReference type="RefSeq" id="WP_011035723.1">
    <property type="nucleotide sequence ID" value="NZ_CP155948.1"/>
</dbReference>
<dbReference type="SMR" id="Q4UZF8"/>
<dbReference type="KEGG" id="xcb:XC_0484"/>
<dbReference type="HOGENOM" id="CLU_034247_2_0_6"/>
<dbReference type="UniPathway" id="UPA00035">
    <property type="reaction ID" value="UER00043"/>
</dbReference>
<dbReference type="Proteomes" id="UP000000420">
    <property type="component" value="Chromosome"/>
</dbReference>
<dbReference type="GO" id="GO:0004425">
    <property type="term" value="F:indole-3-glycerol-phosphate synthase activity"/>
    <property type="evidence" value="ECO:0007669"/>
    <property type="project" value="UniProtKB-UniRule"/>
</dbReference>
<dbReference type="GO" id="GO:0004640">
    <property type="term" value="F:phosphoribosylanthranilate isomerase activity"/>
    <property type="evidence" value="ECO:0007669"/>
    <property type="project" value="TreeGrafter"/>
</dbReference>
<dbReference type="GO" id="GO:0000162">
    <property type="term" value="P:L-tryptophan biosynthetic process"/>
    <property type="evidence" value="ECO:0007669"/>
    <property type="project" value="UniProtKB-UniRule"/>
</dbReference>
<dbReference type="CDD" id="cd00331">
    <property type="entry name" value="IGPS"/>
    <property type="match status" value="1"/>
</dbReference>
<dbReference type="FunFam" id="3.20.20.70:FF:000024">
    <property type="entry name" value="Indole-3-glycerol phosphate synthase"/>
    <property type="match status" value="1"/>
</dbReference>
<dbReference type="Gene3D" id="3.20.20.70">
    <property type="entry name" value="Aldolase class I"/>
    <property type="match status" value="1"/>
</dbReference>
<dbReference type="HAMAP" id="MF_00134_B">
    <property type="entry name" value="IGPS_B"/>
    <property type="match status" value="1"/>
</dbReference>
<dbReference type="InterPro" id="IPR013785">
    <property type="entry name" value="Aldolase_TIM"/>
</dbReference>
<dbReference type="InterPro" id="IPR045186">
    <property type="entry name" value="Indole-3-glycerol_P_synth"/>
</dbReference>
<dbReference type="InterPro" id="IPR013798">
    <property type="entry name" value="Indole-3-glycerol_P_synth_dom"/>
</dbReference>
<dbReference type="InterPro" id="IPR001468">
    <property type="entry name" value="Indole-3-GlycerolPSynthase_CS"/>
</dbReference>
<dbReference type="InterPro" id="IPR011060">
    <property type="entry name" value="RibuloseP-bd_barrel"/>
</dbReference>
<dbReference type="NCBIfam" id="NF001370">
    <property type="entry name" value="PRK00278.1-2"/>
    <property type="match status" value="1"/>
</dbReference>
<dbReference type="NCBIfam" id="NF001373">
    <property type="entry name" value="PRK00278.1-6"/>
    <property type="match status" value="1"/>
</dbReference>
<dbReference type="NCBIfam" id="NF001377">
    <property type="entry name" value="PRK00278.2-4"/>
    <property type="match status" value="1"/>
</dbReference>
<dbReference type="PANTHER" id="PTHR22854:SF2">
    <property type="entry name" value="INDOLE-3-GLYCEROL-PHOSPHATE SYNTHASE"/>
    <property type="match status" value="1"/>
</dbReference>
<dbReference type="PANTHER" id="PTHR22854">
    <property type="entry name" value="TRYPTOPHAN BIOSYNTHESIS PROTEIN"/>
    <property type="match status" value="1"/>
</dbReference>
<dbReference type="Pfam" id="PF00218">
    <property type="entry name" value="IGPS"/>
    <property type="match status" value="1"/>
</dbReference>
<dbReference type="SUPFAM" id="SSF51366">
    <property type="entry name" value="Ribulose-phoshate binding barrel"/>
    <property type="match status" value="1"/>
</dbReference>
<dbReference type="PROSITE" id="PS00614">
    <property type="entry name" value="IGPS"/>
    <property type="match status" value="1"/>
</dbReference>
<sequence>MSDILNTILARKADEIAERSARVPLAELVARSADLPLTRGFAAAMKASIAAGEPAVIAEVKKASPSKGVIRPDFHPADIAVSYEFGGASCLSVLTDMYFFQGSDAYLQQAREACTLPVLRKDFTVDPYQVYEARVLGADCILLIVSALEDQQLADLSGLAMQLGLDVLVEVHDIDELERAVQVPVPLVGINNRNLRTFEVSLQTTLDMRAAVPRDRVLVTESGIVTASDVQLMRSNGVNAFLVGETFMRAPEPGEALRQLFFAHD</sequence>
<protein>
    <recommendedName>
        <fullName evidence="1">Indole-3-glycerol phosphate synthase</fullName>
        <shortName evidence="1">IGPS</shortName>
        <ecNumber evidence="1">4.1.1.48</ecNumber>
    </recommendedName>
</protein>
<organism>
    <name type="scientific">Xanthomonas campestris pv. campestris (strain 8004)</name>
    <dbReference type="NCBI Taxonomy" id="314565"/>
    <lineage>
        <taxon>Bacteria</taxon>
        <taxon>Pseudomonadati</taxon>
        <taxon>Pseudomonadota</taxon>
        <taxon>Gammaproteobacteria</taxon>
        <taxon>Lysobacterales</taxon>
        <taxon>Lysobacteraceae</taxon>
        <taxon>Xanthomonas</taxon>
    </lineage>
</organism>
<gene>
    <name evidence="1" type="primary">trpC</name>
    <name type="ordered locus">XC_0484</name>
</gene>